<reference key="1">
    <citation type="journal article" date="2003" name="Lancet">
        <title>Genome sequence of Vibrio parahaemolyticus: a pathogenic mechanism distinct from that of V. cholerae.</title>
        <authorList>
            <person name="Makino K."/>
            <person name="Oshima K."/>
            <person name="Kurokawa K."/>
            <person name="Yokoyama K."/>
            <person name="Uda T."/>
            <person name="Tagomori K."/>
            <person name="Iijima Y."/>
            <person name="Najima M."/>
            <person name="Nakano M."/>
            <person name="Yamashita A."/>
            <person name="Kubota Y."/>
            <person name="Kimura S."/>
            <person name="Yasunaga T."/>
            <person name="Honda T."/>
            <person name="Shinagawa H."/>
            <person name="Hattori M."/>
            <person name="Iida T."/>
        </authorList>
    </citation>
    <scope>NUCLEOTIDE SEQUENCE [LARGE SCALE GENOMIC DNA]</scope>
    <source>
        <strain>RIMD 2210633</strain>
    </source>
</reference>
<dbReference type="EC" id="6.3.5.2" evidence="1"/>
<dbReference type="EMBL" id="BA000031">
    <property type="protein sequence ID" value="BAC58880.1"/>
    <property type="molecule type" value="Genomic_DNA"/>
</dbReference>
<dbReference type="RefSeq" id="NP_796996.1">
    <property type="nucleotide sequence ID" value="NC_004603.1"/>
</dbReference>
<dbReference type="RefSeq" id="WP_005460250.1">
    <property type="nucleotide sequence ID" value="NC_004603.1"/>
</dbReference>
<dbReference type="SMR" id="Q87S07"/>
<dbReference type="GeneID" id="1188092"/>
<dbReference type="KEGG" id="vpa:VP0617"/>
<dbReference type="PATRIC" id="fig|223926.6.peg.585"/>
<dbReference type="eggNOG" id="COG0518">
    <property type="taxonomic scope" value="Bacteria"/>
</dbReference>
<dbReference type="eggNOG" id="COG0519">
    <property type="taxonomic scope" value="Bacteria"/>
</dbReference>
<dbReference type="HOGENOM" id="CLU_014340_0_5_6"/>
<dbReference type="UniPathway" id="UPA00189">
    <property type="reaction ID" value="UER00296"/>
</dbReference>
<dbReference type="Proteomes" id="UP000002493">
    <property type="component" value="Chromosome 1"/>
</dbReference>
<dbReference type="GO" id="GO:0005829">
    <property type="term" value="C:cytosol"/>
    <property type="evidence" value="ECO:0007669"/>
    <property type="project" value="TreeGrafter"/>
</dbReference>
<dbReference type="GO" id="GO:0005524">
    <property type="term" value="F:ATP binding"/>
    <property type="evidence" value="ECO:0007669"/>
    <property type="project" value="UniProtKB-UniRule"/>
</dbReference>
<dbReference type="GO" id="GO:0003921">
    <property type="term" value="F:GMP synthase activity"/>
    <property type="evidence" value="ECO:0007669"/>
    <property type="project" value="InterPro"/>
</dbReference>
<dbReference type="CDD" id="cd01742">
    <property type="entry name" value="GATase1_GMP_Synthase"/>
    <property type="match status" value="1"/>
</dbReference>
<dbReference type="CDD" id="cd01997">
    <property type="entry name" value="GMP_synthase_C"/>
    <property type="match status" value="1"/>
</dbReference>
<dbReference type="FunFam" id="3.30.300.10:FF:000002">
    <property type="entry name" value="GMP synthase [glutamine-hydrolyzing]"/>
    <property type="match status" value="1"/>
</dbReference>
<dbReference type="FunFam" id="3.40.50.620:FF:000001">
    <property type="entry name" value="GMP synthase [glutamine-hydrolyzing]"/>
    <property type="match status" value="1"/>
</dbReference>
<dbReference type="FunFam" id="3.40.50.880:FF:000001">
    <property type="entry name" value="GMP synthase [glutamine-hydrolyzing]"/>
    <property type="match status" value="1"/>
</dbReference>
<dbReference type="Gene3D" id="3.30.300.10">
    <property type="match status" value="1"/>
</dbReference>
<dbReference type="Gene3D" id="3.40.50.880">
    <property type="match status" value="1"/>
</dbReference>
<dbReference type="Gene3D" id="3.40.50.620">
    <property type="entry name" value="HUPs"/>
    <property type="match status" value="1"/>
</dbReference>
<dbReference type="HAMAP" id="MF_00344">
    <property type="entry name" value="GMP_synthase"/>
    <property type="match status" value="1"/>
</dbReference>
<dbReference type="InterPro" id="IPR029062">
    <property type="entry name" value="Class_I_gatase-like"/>
</dbReference>
<dbReference type="InterPro" id="IPR017926">
    <property type="entry name" value="GATASE"/>
</dbReference>
<dbReference type="InterPro" id="IPR001674">
    <property type="entry name" value="GMP_synth_C"/>
</dbReference>
<dbReference type="InterPro" id="IPR004739">
    <property type="entry name" value="GMP_synth_GATase"/>
</dbReference>
<dbReference type="InterPro" id="IPR022955">
    <property type="entry name" value="GMP_synthase"/>
</dbReference>
<dbReference type="InterPro" id="IPR025777">
    <property type="entry name" value="GMPS_ATP_PPase_dom"/>
</dbReference>
<dbReference type="InterPro" id="IPR022310">
    <property type="entry name" value="NAD/GMP_synthase"/>
</dbReference>
<dbReference type="InterPro" id="IPR014729">
    <property type="entry name" value="Rossmann-like_a/b/a_fold"/>
</dbReference>
<dbReference type="NCBIfam" id="TIGR00884">
    <property type="entry name" value="guaA_Cterm"/>
    <property type="match status" value="1"/>
</dbReference>
<dbReference type="NCBIfam" id="TIGR00888">
    <property type="entry name" value="guaA_Nterm"/>
    <property type="match status" value="1"/>
</dbReference>
<dbReference type="NCBIfam" id="NF000848">
    <property type="entry name" value="PRK00074.1"/>
    <property type="match status" value="1"/>
</dbReference>
<dbReference type="PANTHER" id="PTHR11922:SF2">
    <property type="entry name" value="GMP SYNTHASE [GLUTAMINE-HYDROLYZING]"/>
    <property type="match status" value="1"/>
</dbReference>
<dbReference type="PANTHER" id="PTHR11922">
    <property type="entry name" value="GMP SYNTHASE-RELATED"/>
    <property type="match status" value="1"/>
</dbReference>
<dbReference type="Pfam" id="PF00117">
    <property type="entry name" value="GATase"/>
    <property type="match status" value="1"/>
</dbReference>
<dbReference type="Pfam" id="PF00958">
    <property type="entry name" value="GMP_synt_C"/>
    <property type="match status" value="1"/>
</dbReference>
<dbReference type="Pfam" id="PF02540">
    <property type="entry name" value="NAD_synthase"/>
    <property type="match status" value="1"/>
</dbReference>
<dbReference type="PRINTS" id="PR00097">
    <property type="entry name" value="ANTSNTHASEII"/>
</dbReference>
<dbReference type="PRINTS" id="PR00099">
    <property type="entry name" value="CPSGATASE"/>
</dbReference>
<dbReference type="PRINTS" id="PR00096">
    <property type="entry name" value="GATASE"/>
</dbReference>
<dbReference type="SUPFAM" id="SSF52402">
    <property type="entry name" value="Adenine nucleotide alpha hydrolases-like"/>
    <property type="match status" value="1"/>
</dbReference>
<dbReference type="SUPFAM" id="SSF52317">
    <property type="entry name" value="Class I glutamine amidotransferase-like"/>
    <property type="match status" value="1"/>
</dbReference>
<dbReference type="SUPFAM" id="SSF54810">
    <property type="entry name" value="GMP synthetase C-terminal dimerisation domain"/>
    <property type="match status" value="1"/>
</dbReference>
<dbReference type="PROSITE" id="PS51273">
    <property type="entry name" value="GATASE_TYPE_1"/>
    <property type="match status" value="1"/>
</dbReference>
<dbReference type="PROSITE" id="PS51553">
    <property type="entry name" value="GMPS_ATP_PPASE"/>
    <property type="match status" value="1"/>
</dbReference>
<evidence type="ECO:0000255" key="1">
    <source>
        <dbReference type="HAMAP-Rule" id="MF_00344"/>
    </source>
</evidence>
<organism>
    <name type="scientific">Vibrio parahaemolyticus serotype O3:K6 (strain RIMD 2210633)</name>
    <dbReference type="NCBI Taxonomy" id="223926"/>
    <lineage>
        <taxon>Bacteria</taxon>
        <taxon>Pseudomonadati</taxon>
        <taxon>Pseudomonadota</taxon>
        <taxon>Gammaproteobacteria</taxon>
        <taxon>Vibrionales</taxon>
        <taxon>Vibrionaceae</taxon>
        <taxon>Vibrio</taxon>
    </lineage>
</organism>
<gene>
    <name evidence="1" type="primary">guaA</name>
    <name type="ordered locus">VP0617</name>
</gene>
<protein>
    <recommendedName>
        <fullName evidence="1">GMP synthase [glutamine-hydrolyzing]</fullName>
        <ecNumber evidence="1">6.3.5.2</ecNumber>
    </recommendedName>
    <alternativeName>
        <fullName evidence="1">GMP synthetase</fullName>
    </alternativeName>
    <alternativeName>
        <fullName evidence="1">Glutamine amidotransferase</fullName>
    </alternativeName>
</protein>
<proteinExistence type="inferred from homology"/>
<comment type="function">
    <text evidence="1">Catalyzes the synthesis of GMP from XMP.</text>
</comment>
<comment type="catalytic activity">
    <reaction evidence="1">
        <text>XMP + L-glutamine + ATP + H2O = GMP + L-glutamate + AMP + diphosphate + 2 H(+)</text>
        <dbReference type="Rhea" id="RHEA:11680"/>
        <dbReference type="ChEBI" id="CHEBI:15377"/>
        <dbReference type="ChEBI" id="CHEBI:15378"/>
        <dbReference type="ChEBI" id="CHEBI:29985"/>
        <dbReference type="ChEBI" id="CHEBI:30616"/>
        <dbReference type="ChEBI" id="CHEBI:33019"/>
        <dbReference type="ChEBI" id="CHEBI:57464"/>
        <dbReference type="ChEBI" id="CHEBI:58115"/>
        <dbReference type="ChEBI" id="CHEBI:58359"/>
        <dbReference type="ChEBI" id="CHEBI:456215"/>
        <dbReference type="EC" id="6.3.5.2"/>
    </reaction>
</comment>
<comment type="pathway">
    <text evidence="1">Purine metabolism; GMP biosynthesis; GMP from XMP (L-Gln route): step 1/1.</text>
</comment>
<comment type="subunit">
    <text evidence="1">Homodimer.</text>
</comment>
<keyword id="KW-0067">ATP-binding</keyword>
<keyword id="KW-0315">Glutamine amidotransferase</keyword>
<keyword id="KW-0332">GMP biosynthesis</keyword>
<keyword id="KW-0436">Ligase</keyword>
<keyword id="KW-0547">Nucleotide-binding</keyword>
<keyword id="KW-0658">Purine biosynthesis</keyword>
<accession>Q87S07</accession>
<feature type="chain" id="PRO_0000140204" description="GMP synthase [glutamine-hydrolyzing]">
    <location>
        <begin position="1"/>
        <end position="517"/>
    </location>
</feature>
<feature type="domain" description="Glutamine amidotransferase type-1" evidence="1">
    <location>
        <begin position="9"/>
        <end position="199"/>
    </location>
</feature>
<feature type="domain" description="GMPS ATP-PPase" evidence="1">
    <location>
        <begin position="200"/>
        <end position="392"/>
    </location>
</feature>
<feature type="active site" description="Nucleophile" evidence="1">
    <location>
        <position position="86"/>
    </location>
</feature>
<feature type="active site" evidence="1">
    <location>
        <position position="173"/>
    </location>
</feature>
<feature type="active site" evidence="1">
    <location>
        <position position="175"/>
    </location>
</feature>
<feature type="binding site" evidence="1">
    <location>
        <begin position="227"/>
        <end position="233"/>
    </location>
    <ligand>
        <name>ATP</name>
        <dbReference type="ChEBI" id="CHEBI:30616"/>
    </ligand>
</feature>
<name>GUAA_VIBPA</name>
<sequence length="517" mass="57672">MTKNIHDQRILILDFGSQYTQLVARRVREIGVYCELWSWDVEEADIREFNPDGIILSGGPESVTEENSPRAPQYVFDSGVPVLGVCYGMQTMAEQLGGKVAGSNEREFGYAQVKVSGESAIFKDLEATQDVWMSHGDKVVEIPADFVKVGETDTCPYAAMANEEKKYYGVQFHPEVTHTKGGLQMLENFVLGVCGCERLWTSESIIEDAVARIKEQVGDDEVILGLSGGVDSSVVAMLVHRAIGDKLTCVFVDNGLLRLNEGQQVMDMFGDKFGLNIIKVDAEERFLEALKGKSDPEEKRKTIGHVFVDVFDEESKKLKNAKWLAQGTIYPDVIESAASKTGKAHVIKSHHNVGGLPDDMEMGLVEPLRELFKDEVRKIGLELGLPYNMLYRHPFPGPGLGVRVLGEIKKEYCDLLRRADAIFIEELHAADLYDKVSQAFTVFLPVRSVGVMGDGRKYDWVVSLRAVETIDFMTAHWAHLPYDFLGKVSNRIINEVEGISRVVYDISGKPPATIEWE</sequence>